<organism>
    <name type="scientific">Salmonella paratyphi B (strain ATCC BAA-1250 / SPB7)</name>
    <dbReference type="NCBI Taxonomy" id="1016998"/>
    <lineage>
        <taxon>Bacteria</taxon>
        <taxon>Pseudomonadati</taxon>
        <taxon>Pseudomonadota</taxon>
        <taxon>Gammaproteobacteria</taxon>
        <taxon>Enterobacterales</taxon>
        <taxon>Enterobacteriaceae</taxon>
        <taxon>Salmonella</taxon>
    </lineage>
</organism>
<dbReference type="EC" id="4.2.2.n1" evidence="1"/>
<dbReference type="EMBL" id="CP000886">
    <property type="protein sequence ID" value="ABX69210.1"/>
    <property type="status" value="ALT_INIT"/>
    <property type="molecule type" value="Genomic_DNA"/>
</dbReference>
<dbReference type="SMR" id="A9N4R0"/>
<dbReference type="CAZy" id="GH23">
    <property type="family name" value="Glycoside Hydrolase Family 23"/>
</dbReference>
<dbReference type="KEGG" id="spq:SPAB_03879"/>
<dbReference type="PATRIC" id="fig|1016998.12.peg.3655"/>
<dbReference type="HOGENOM" id="CLU_044583_0_0_6"/>
<dbReference type="Proteomes" id="UP000008556">
    <property type="component" value="Chromosome"/>
</dbReference>
<dbReference type="GO" id="GO:0009279">
    <property type="term" value="C:cell outer membrane"/>
    <property type="evidence" value="ECO:0007669"/>
    <property type="project" value="UniProtKB-SubCell"/>
</dbReference>
<dbReference type="GO" id="GO:0016798">
    <property type="term" value="F:hydrolase activity, acting on glycosyl bonds"/>
    <property type="evidence" value="ECO:0007669"/>
    <property type="project" value="InterPro"/>
</dbReference>
<dbReference type="GO" id="GO:0008933">
    <property type="term" value="F:peptidoglycan lytic transglycosylase activity"/>
    <property type="evidence" value="ECO:0007669"/>
    <property type="project" value="UniProtKB-UniRule"/>
</dbReference>
<dbReference type="GO" id="GO:0016998">
    <property type="term" value="P:cell wall macromolecule catabolic process"/>
    <property type="evidence" value="ECO:0007669"/>
    <property type="project" value="UniProtKB-UniRule"/>
</dbReference>
<dbReference type="GO" id="GO:0071555">
    <property type="term" value="P:cell wall organization"/>
    <property type="evidence" value="ECO:0007669"/>
    <property type="project" value="UniProtKB-KW"/>
</dbReference>
<dbReference type="GO" id="GO:0000270">
    <property type="term" value="P:peptidoglycan metabolic process"/>
    <property type="evidence" value="ECO:0007669"/>
    <property type="project" value="InterPro"/>
</dbReference>
<dbReference type="CDD" id="cd16893">
    <property type="entry name" value="LT_MltC_MltE"/>
    <property type="match status" value="1"/>
</dbReference>
<dbReference type="FunFam" id="1.10.530.10:FF:000002">
    <property type="entry name" value="Membrane-bound lytic murein transglycosylase C"/>
    <property type="match status" value="1"/>
</dbReference>
<dbReference type="Gene3D" id="1.10.530.10">
    <property type="match status" value="1"/>
</dbReference>
<dbReference type="HAMAP" id="MF_01616">
    <property type="entry name" value="MltC"/>
    <property type="match status" value="1"/>
</dbReference>
<dbReference type="InterPro" id="IPR023346">
    <property type="entry name" value="Lysozyme-like_dom_sf"/>
</dbReference>
<dbReference type="InterPro" id="IPR023664">
    <property type="entry name" value="Murein_transglycosylaseC"/>
</dbReference>
<dbReference type="InterPro" id="IPR024570">
    <property type="entry name" value="Murein_transglycosylaseC_N"/>
</dbReference>
<dbReference type="InterPro" id="IPR000189">
    <property type="entry name" value="Transglyc_AS"/>
</dbReference>
<dbReference type="InterPro" id="IPR008258">
    <property type="entry name" value="Transglycosylase_SLT_dom_1"/>
</dbReference>
<dbReference type="NCBIfam" id="NF008670">
    <property type="entry name" value="PRK11671.1"/>
    <property type="match status" value="1"/>
</dbReference>
<dbReference type="PANTHER" id="PTHR37423:SF2">
    <property type="entry name" value="MEMBRANE-BOUND LYTIC MUREIN TRANSGLYCOSYLASE C"/>
    <property type="match status" value="1"/>
</dbReference>
<dbReference type="PANTHER" id="PTHR37423">
    <property type="entry name" value="SOLUBLE LYTIC MUREIN TRANSGLYCOSYLASE-RELATED"/>
    <property type="match status" value="1"/>
</dbReference>
<dbReference type="Pfam" id="PF11873">
    <property type="entry name" value="Mltc_N"/>
    <property type="match status" value="1"/>
</dbReference>
<dbReference type="Pfam" id="PF01464">
    <property type="entry name" value="SLT"/>
    <property type="match status" value="1"/>
</dbReference>
<dbReference type="SUPFAM" id="SSF53955">
    <property type="entry name" value="Lysozyme-like"/>
    <property type="match status" value="1"/>
</dbReference>
<dbReference type="PROSITE" id="PS51257">
    <property type="entry name" value="PROKAR_LIPOPROTEIN"/>
    <property type="match status" value="1"/>
</dbReference>
<dbReference type="PROSITE" id="PS00922">
    <property type="entry name" value="TRANSGLYCOSYLASE"/>
    <property type="match status" value="1"/>
</dbReference>
<protein>
    <recommendedName>
        <fullName evidence="1">Membrane-bound lytic murein transglycosylase C</fullName>
        <ecNumber evidence="1">4.2.2.n1</ecNumber>
    </recommendedName>
    <alternativeName>
        <fullName evidence="1">Murein lyase C</fullName>
    </alternativeName>
</protein>
<keyword id="KW-0998">Cell outer membrane</keyword>
<keyword id="KW-0961">Cell wall biogenesis/degradation</keyword>
<keyword id="KW-0449">Lipoprotein</keyword>
<keyword id="KW-0456">Lyase</keyword>
<keyword id="KW-0472">Membrane</keyword>
<keyword id="KW-0564">Palmitate</keyword>
<keyword id="KW-0732">Signal</keyword>
<reference key="1">
    <citation type="submission" date="2007-11" db="EMBL/GenBank/DDBJ databases">
        <authorList>
            <consortium name="The Salmonella enterica serovar Paratyphi B Genome Sequencing Project"/>
            <person name="McClelland M."/>
            <person name="Sanderson E.K."/>
            <person name="Porwollik S."/>
            <person name="Spieth J."/>
            <person name="Clifton W.S."/>
            <person name="Fulton R."/>
            <person name="Cordes M."/>
            <person name="Wollam A."/>
            <person name="Shah N."/>
            <person name="Pepin K."/>
            <person name="Bhonagiri V."/>
            <person name="Nash W."/>
            <person name="Johnson M."/>
            <person name="Thiruvilangam P."/>
            <person name="Wilson R."/>
        </authorList>
    </citation>
    <scope>NUCLEOTIDE SEQUENCE [LARGE SCALE GENOMIC DNA]</scope>
    <source>
        <strain>ATCC BAA-1250 / SPB7</strain>
    </source>
</reference>
<gene>
    <name evidence="1" type="primary">mltC</name>
    <name type="ordered locus">SPAB_03879</name>
</gene>
<sequence>MKKLLALAVIAPLLISCSSSTKKGETYNEAWVKDTNGFDILMGQFANNIENLWGYKEVLIAGPKDYVKYTDQFQTRSHINFDDGTITVETIAGTEPTAHLRRAIIKTLLMGDDPTSVDLYSDVDDIKISKEPFLYGQVLDNTGQPIRWEGRATTFADYLLKTRLKSRSNGLRIIYSVTINLVPNHLDKRAHKYIGMVRQASRKYGVDESLILAIMQTESSFNPYAVSHADALGLMQVVQHSAGKDVFRSQGKSGTPSRNFLFDPASNIDTGTAYLAMLNNVYLSGIENPTSRRYAVITAYNGGAGSVLRVFSNDKIQAANMINRMSPGDVYQILTTRHPSAESRRYLYKVNSAQRSYRRR</sequence>
<accession>A9N4R0</accession>
<name>MLTC_SALPB</name>
<evidence type="ECO:0000255" key="1">
    <source>
        <dbReference type="HAMAP-Rule" id="MF_01616"/>
    </source>
</evidence>
<evidence type="ECO:0000305" key="2"/>
<feature type="signal peptide" evidence="1">
    <location>
        <begin position="1"/>
        <end position="16"/>
    </location>
</feature>
<feature type="chain" id="PRO_0000335586" description="Membrane-bound lytic murein transglycosylase C">
    <location>
        <begin position="17"/>
        <end position="360"/>
    </location>
</feature>
<feature type="lipid moiety-binding region" description="N-palmitoyl cysteine" evidence="1">
    <location>
        <position position="17"/>
    </location>
</feature>
<feature type="lipid moiety-binding region" description="S-diacylglycerol cysteine" evidence="1">
    <location>
        <position position="17"/>
    </location>
</feature>
<comment type="function">
    <text evidence="1">Murein-degrading enzyme. May play a role in recycling of muropeptides during cell elongation and/or cell division.</text>
</comment>
<comment type="catalytic activity">
    <reaction evidence="1">
        <text>Exolytic cleavage of the (1-&gt;4)-beta-glycosidic linkage between N-acetylmuramic acid (MurNAc) and N-acetylglucosamine (GlcNAc) residues in peptidoglycan, from either the reducing or the non-reducing ends of the peptidoglycan chains, with concomitant formation of a 1,6-anhydrobond in the MurNAc residue.</text>
        <dbReference type="EC" id="4.2.2.n1"/>
    </reaction>
</comment>
<comment type="subcellular location">
    <subcellularLocation>
        <location evidence="1">Cell outer membrane</location>
        <topology evidence="1">Lipid-anchor</topology>
    </subcellularLocation>
</comment>
<comment type="similarity">
    <text evidence="1">Belongs to the transglycosylase Slt family.</text>
</comment>
<comment type="sequence caution" evidence="2">
    <conflict type="erroneous initiation">
        <sequence resource="EMBL-CDS" id="ABX69210"/>
    </conflict>
</comment>
<proteinExistence type="inferred from homology"/>